<reference key="1">
    <citation type="journal article" date="2000" name="Biochem. J.">
        <title>A bone sialoprotein-binding protein from Staphylococcus aureus: a member of the staphylococcal sdr family.</title>
        <authorList>
            <person name="Tung H.-S."/>
            <person name="Guss B."/>
            <person name="Hellman U."/>
            <person name="Persson L."/>
            <person name="Rubin K."/>
            <person name="Ryden C."/>
        </authorList>
    </citation>
    <scope>NUCLEOTIDE SEQUENCE [GENOMIC DNA]</scope>
    <scope>PROTEIN SEQUENCE OF 326-338; 356-361; 368-378; 382-390; 506-518; 549-558 AND 626-638</scope>
    <scope>FUNCTION</scope>
    <source>
        <strain>BM12987 / O24</strain>
    </source>
</reference>
<reference key="2">
    <citation type="journal article" date="2006" name="Biochem. Biophys. Res. Commun.">
        <title>Key adhesin gene in community-acquired methicillin-resistant Staphylococcus aureus.</title>
        <authorList>
            <person name="Otsuka T."/>
            <person name="Saito K."/>
            <person name="Dohmae S."/>
            <person name="Takano T."/>
            <person name="Higuchi W."/>
            <person name="Takizawa Y."/>
            <person name="Okubo T."/>
            <person name="Iwakura N."/>
            <person name="Yamamoto T."/>
        </authorList>
    </citation>
    <scope>NUCLEOTIDE SEQUENCE [GENOMIC DNA]</scope>
    <source>
        <strain>80s-2</strain>
        <strain>HT20010466</strain>
        <strain>HT20030336</strain>
        <strain>NN1</strain>
        <strain>USA1100</strain>
    </source>
</reference>
<reference key="3">
    <citation type="journal article" date="1994" name="Eur. J. Biochem.">
        <title>Purification of a bone sialoprotein-binding protein from Staphylococcus aureus.</title>
        <authorList>
            <person name="Yacoub A."/>
            <person name="Lindahl P."/>
            <person name="Rubin K."/>
            <person name="Wendel M."/>
            <person name="Heinegard D."/>
            <person name="Ryden C."/>
        </authorList>
    </citation>
    <scope>IDENTIFICATION</scope>
    <source>
        <strain>BM12987 / O24</strain>
    </source>
</reference>
<dbReference type="EMBL" id="Y18653">
    <property type="protein sequence ID" value="CAB75732.1"/>
    <property type="status" value="ALT_FRAME"/>
    <property type="molecule type" value="Genomic_DNA"/>
</dbReference>
<dbReference type="EMBL" id="AB252195">
    <property type="protein sequence ID" value="BAE97666.1"/>
    <property type="molecule type" value="Genomic_DNA"/>
</dbReference>
<dbReference type="EMBL" id="AB246404">
    <property type="protein sequence ID" value="BAE97665.1"/>
    <property type="molecule type" value="Genomic_DNA"/>
</dbReference>
<dbReference type="EMBL" id="AB246403">
    <property type="protein sequence ID" value="BAE97664.1"/>
    <property type="molecule type" value="Genomic_DNA"/>
</dbReference>
<dbReference type="EMBL" id="AB246402">
    <property type="protein sequence ID" value="BAE97663.1"/>
    <property type="molecule type" value="Genomic_DNA"/>
</dbReference>
<dbReference type="EMBL" id="AB246401">
    <property type="protein sequence ID" value="BAE97662.1"/>
    <property type="molecule type" value="Genomic_DNA"/>
</dbReference>
<dbReference type="PDB" id="5CF3">
    <property type="method" value="X-ray"/>
    <property type="resolution" value="2.03 A"/>
    <property type="chains" value="A=272-598"/>
</dbReference>
<dbReference type="PDB" id="5CFA">
    <property type="method" value="X-ray"/>
    <property type="resolution" value="1.45 A"/>
    <property type="chains" value="A/B=272-598"/>
</dbReference>
<dbReference type="PDBsum" id="5CF3"/>
<dbReference type="PDBsum" id="5CFA"/>
<dbReference type="SMR" id="Q14U76"/>
<dbReference type="PATRIC" id="fig|1280.4810.peg.1109"/>
<dbReference type="EvolutionaryTrace" id="Q14U76"/>
<dbReference type="PRO" id="PR:Q14U76"/>
<dbReference type="GO" id="GO:0005576">
    <property type="term" value="C:extracellular region"/>
    <property type="evidence" value="ECO:0007669"/>
    <property type="project" value="UniProtKB-KW"/>
</dbReference>
<dbReference type="GO" id="GO:0007155">
    <property type="term" value="P:cell adhesion"/>
    <property type="evidence" value="ECO:0007669"/>
    <property type="project" value="InterPro"/>
</dbReference>
<dbReference type="Gene3D" id="2.60.40.1280">
    <property type="match status" value="1"/>
</dbReference>
<dbReference type="Gene3D" id="2.60.40.1290">
    <property type="match status" value="1"/>
</dbReference>
<dbReference type="Gene3D" id="2.60.40.10">
    <property type="entry name" value="Immunoglobulins"/>
    <property type="match status" value="3"/>
</dbReference>
<dbReference type="InterPro" id="IPR011266">
    <property type="entry name" value="Adhesin_Fg-bd_dom_2"/>
</dbReference>
<dbReference type="InterPro" id="IPR008966">
    <property type="entry name" value="Adhesion_dom_sf"/>
</dbReference>
<dbReference type="InterPro" id="IPR011252">
    <property type="entry name" value="Fibrogen-bd_dom1"/>
</dbReference>
<dbReference type="InterPro" id="IPR013783">
    <property type="entry name" value="Ig-like_fold"/>
</dbReference>
<dbReference type="InterPro" id="IPR019931">
    <property type="entry name" value="LPXTG_anchor"/>
</dbReference>
<dbReference type="InterPro" id="IPR050972">
    <property type="entry name" value="SDr-like"/>
</dbReference>
<dbReference type="InterPro" id="IPR033764">
    <property type="entry name" value="Sdr_B"/>
</dbReference>
<dbReference type="InterPro" id="IPR041171">
    <property type="entry name" value="SDR_Ig"/>
</dbReference>
<dbReference type="InterPro" id="IPR005877">
    <property type="entry name" value="YSIRK_signal_dom"/>
</dbReference>
<dbReference type="NCBIfam" id="TIGR01167">
    <property type="entry name" value="LPXTG_anchor"/>
    <property type="match status" value="1"/>
</dbReference>
<dbReference type="NCBIfam" id="TIGR01168">
    <property type="entry name" value="YSIRK_signal"/>
    <property type="match status" value="1"/>
</dbReference>
<dbReference type="PANTHER" id="PTHR34403">
    <property type="entry name" value="TOL-PAL SYSTEM PROTEIN TOLA"/>
    <property type="match status" value="1"/>
</dbReference>
<dbReference type="PANTHER" id="PTHR34403:SF8">
    <property type="entry name" value="TOL-PAL SYSTEM PROTEIN TOLA"/>
    <property type="match status" value="1"/>
</dbReference>
<dbReference type="Pfam" id="PF17961">
    <property type="entry name" value="Big_8"/>
    <property type="match status" value="1"/>
</dbReference>
<dbReference type="Pfam" id="PF00746">
    <property type="entry name" value="Gram_pos_anchor"/>
    <property type="match status" value="1"/>
</dbReference>
<dbReference type="Pfam" id="PF17210">
    <property type="entry name" value="SdrD_B"/>
    <property type="match status" value="3"/>
</dbReference>
<dbReference type="Pfam" id="PF10425">
    <property type="entry name" value="SdrG_C_C"/>
    <property type="match status" value="1"/>
</dbReference>
<dbReference type="Pfam" id="PF04650">
    <property type="entry name" value="YSIRK_signal"/>
    <property type="match status" value="1"/>
</dbReference>
<dbReference type="SUPFAM" id="SSF49401">
    <property type="entry name" value="Bacterial adhesins"/>
    <property type="match status" value="2"/>
</dbReference>
<dbReference type="SUPFAM" id="SSF117074">
    <property type="entry name" value="Hypothetical protein PA1324"/>
    <property type="match status" value="3"/>
</dbReference>
<dbReference type="PROSITE" id="PS50847">
    <property type="entry name" value="GRAM_POS_ANCHORING"/>
    <property type="match status" value="1"/>
</dbReference>
<comment type="function">
    <text evidence="4">Specifically interacts with bone sialoprotein (BSP), a glycoprotein of bone and dentin extracellular matrix. Could contribute to staphylococcal osteomyelitis and arthritis.</text>
</comment>
<comment type="subcellular location">
    <subcellularLocation>
        <location evidence="2">Secreted</location>
        <location evidence="2">Cell wall</location>
        <topology evidence="2">Peptidoglycan-anchor</topology>
    </subcellularLocation>
</comment>
<comment type="similarity">
    <text evidence="5">Belongs to the serine-aspartate repeat-containing protein (SDr) family.</text>
</comment>
<comment type="sequence caution" evidence="5">
    <conflict type="frameshift">
        <sequence resource="EMBL-CDS" id="CAB75732"/>
    </conflict>
</comment>
<keyword id="KW-0002">3D-structure</keyword>
<keyword id="KW-0134">Cell wall</keyword>
<keyword id="KW-0903">Direct protein sequencing</keyword>
<keyword id="KW-0572">Peptidoglycan-anchor</keyword>
<keyword id="KW-0677">Repeat</keyword>
<keyword id="KW-0964">Secreted</keyword>
<keyword id="KW-0732">Signal</keyword>
<keyword id="KW-0843">Virulence</keyword>
<accession>Q14U76</accession>
<accession>Q14U55</accession>
<accession>Q9KWX6</accession>
<proteinExistence type="evidence at protein level"/>
<organism>
    <name type="scientific">Staphylococcus aureus</name>
    <dbReference type="NCBI Taxonomy" id="1280"/>
    <lineage>
        <taxon>Bacteria</taxon>
        <taxon>Bacillati</taxon>
        <taxon>Bacillota</taxon>
        <taxon>Bacilli</taxon>
        <taxon>Bacillales</taxon>
        <taxon>Staphylococcaceae</taxon>
        <taxon>Staphylococcus</taxon>
    </lineage>
</organism>
<gene>
    <name type="primary">bbp</name>
</gene>
<sequence>MINRDNKKAITKKGMISNRLNKFSIRKYTVGTASILVGTTLIFGLGNQEAKAAENTSTENAKQDEASASDNKEVVSETENNSTQKNDLTNPIKKETNTDSHQEAKEAPTTSSTQQQQNNATTSTETKPQNIEKENVKPSTDKTATEDTSVILEEKKAPNNTNNDVTTKPSTSEIQTTPTTPQESTNIENSQPQPTPSKVDNQVTDAINPKEPVNVSKEELKNNPEKLKELVRNDSNTDRSTKPVATAPTSVAPKRVNAKIRFAVAQPAAVASNNVNDLITVTKQMITEGIKDDGVIQAHDGEHIIYTSDFKIDNAVKAGDTMTVKYDKHTIPSDITDDFTPVDITDPSGEVIAKGTFDLNTKTITYKFTDYVDRYENVNAKLELNSYIDKKEVPNETNLNLTFATADKETSKNVKVEYQKPIVKDESNIQSIFSHLDTTKHEVEQTIYVNPLKLNAKNTNVTIKSGGVADNGDYYTGDGSTIIDSNTEIKVYKVASGQQLPQSNKIYDYSQYEDVTNSVTINKNYGTNMANINFGDIDSAYIVKVVSKYTPGAEDDLAVQQGVRMTTTNKYNYSSYAGYTNTILSTTDSGGGDGTVKPEEKLYKIGDYVWEDVDKDGVQGTDSKEKPMANVLVTLTYPDGTTKSVRTDANGHYEFGGLKDGETYTVKFETPAGYLPTKENGTTDGEKDSNGSSVTVKINGKDDMSLDTGFYKEPKYNLGDYVWEDTNKDGIQDANEPGIKDVKVTLKDSTGKVIGTTTTDASGKYKFTDLDNGNYTVEFETPAGYTPTVKNTTAEDKDSNGLTTTGVIKDADNWTLDSGFYKTPKYSLGDYVWYDSNKDGKQDSTEKGIKDVTVTLQNEKGEVIGTTKTDENGKYRFDNLDSGKYKVIFEKPAGLTQTGTNTTEDDKDADGGEVDVTITDHDDFTLDNGYFEEDTSDSDSDSDSDSDSDSDSDSDSDSDSDSDSDSDSDSDSDSDSDSDSDSDSDSDSDSDSDSDSDSDSDSDSDSDSDSDSDSDSDSDSDSDSDSDSDSDSDSDSDSDSDSDSDSDSDSDSDSDSDSDSDSDSDSDSDSDSDSDSDSDSDSDSDSDSDAGKHTPVKPMSATKDHHNKAKALPETGSENNGSNNATLFGGLFAALGSLLLFGRRKKQNK</sequence>
<evidence type="ECO:0000255" key="1"/>
<evidence type="ECO:0000255" key="2">
    <source>
        <dbReference type="PROSITE-ProRule" id="PRU00477"/>
    </source>
</evidence>
<evidence type="ECO:0000256" key="3">
    <source>
        <dbReference type="SAM" id="MobiDB-lite"/>
    </source>
</evidence>
<evidence type="ECO:0000269" key="4">
    <source>
    </source>
</evidence>
<evidence type="ECO:0000305" key="5"/>
<evidence type="ECO:0007829" key="6">
    <source>
        <dbReference type="PDB" id="5CF3"/>
    </source>
</evidence>
<evidence type="ECO:0007829" key="7">
    <source>
        <dbReference type="PDB" id="5CFA"/>
    </source>
</evidence>
<protein>
    <recommendedName>
        <fullName>Bone sialoprotein-binding protein</fullName>
        <shortName>BSP-binding protein</shortName>
    </recommendedName>
</protein>
<name>BBP_STAAU</name>
<feature type="signal peptide" evidence="1">
    <location>
        <begin position="1"/>
        <end position="52"/>
    </location>
</feature>
<feature type="chain" id="PRO_0000288661" description="Bone sialoprotein-binding protein">
    <location>
        <begin position="53"/>
        <end position="1115"/>
    </location>
</feature>
<feature type="propeptide" id="PRO_0000288662" description="Removed by sortase" evidence="2">
    <location>
        <begin position="1116"/>
        <end position="1149"/>
    </location>
</feature>
<feature type="domain" description="CNA-B 1">
    <location>
        <begin position="602"/>
        <end position="714"/>
    </location>
</feature>
<feature type="domain" description="CNA-B 2">
    <location>
        <begin position="715"/>
        <end position="824"/>
    </location>
</feature>
<feature type="domain" description="CNA-B 3">
    <location>
        <begin position="825"/>
        <end position="935"/>
    </location>
</feature>
<feature type="region of interest" description="Ligand binding A region">
    <location>
        <begin position="53"/>
        <end position="601"/>
    </location>
</feature>
<feature type="region of interest" description="Disordered" evidence="3">
    <location>
        <begin position="54"/>
        <end position="249"/>
    </location>
</feature>
<feature type="region of interest" description="Disordered" evidence="3">
    <location>
        <begin position="675"/>
        <end position="697"/>
    </location>
</feature>
<feature type="region of interest" description="Disordered" evidence="3">
    <location>
        <begin position="896"/>
        <end position="1124"/>
    </location>
</feature>
<feature type="short sequence motif" description="LPXTG sorting signal" evidence="2">
    <location>
        <begin position="1112"/>
        <end position="1116"/>
    </location>
</feature>
<feature type="compositionally biased region" description="Basic and acidic residues" evidence="3">
    <location>
        <begin position="61"/>
        <end position="75"/>
    </location>
</feature>
<feature type="compositionally biased region" description="Polar residues" evidence="3">
    <location>
        <begin position="77"/>
        <end position="89"/>
    </location>
</feature>
<feature type="compositionally biased region" description="Basic and acidic residues" evidence="3">
    <location>
        <begin position="92"/>
        <end position="106"/>
    </location>
</feature>
<feature type="compositionally biased region" description="Low complexity" evidence="3">
    <location>
        <begin position="109"/>
        <end position="126"/>
    </location>
</feature>
<feature type="compositionally biased region" description="Basic and acidic residues" evidence="3">
    <location>
        <begin position="130"/>
        <end position="145"/>
    </location>
</feature>
<feature type="compositionally biased region" description="Polar residues" evidence="3">
    <location>
        <begin position="158"/>
        <end position="205"/>
    </location>
</feature>
<feature type="compositionally biased region" description="Basic and acidic residues" evidence="3">
    <location>
        <begin position="216"/>
        <end position="241"/>
    </location>
</feature>
<feature type="compositionally biased region" description="Acidic residues" evidence="3">
    <location>
        <begin position="903"/>
        <end position="913"/>
    </location>
</feature>
<feature type="compositionally biased region" description="Acidic residues" evidence="3">
    <location>
        <begin position="930"/>
        <end position="1088"/>
    </location>
</feature>
<feature type="modified residue" description="Pentaglycyl murein peptidoglycan amidated threonine" evidence="2">
    <location>
        <position position="1115"/>
    </location>
</feature>
<feature type="sequence variant" description="In strain: BM12987 / O24.">
    <original>A</original>
    <variation>T</variation>
    <location>
        <position position="206"/>
    </location>
</feature>
<feature type="sequence variant" description="In strain: 80s-2 and BM12987 / O24.">
    <original>I</original>
    <variation>T</variation>
    <location>
        <position position="207"/>
    </location>
</feature>
<feature type="sequence variant" description="In strain: BM12987 / O24.">
    <original>H</original>
    <variation>E</variation>
    <location>
        <position position="329"/>
    </location>
</feature>
<feature type="sequence variant" description="In strain: BM12987 / O24.">
    <original>T</original>
    <variation>S</variation>
    <location>
        <position position="595"/>
    </location>
</feature>
<feature type="sequence variant" description="In strain: 80s-2.">
    <original>E</original>
    <variation>D</variation>
    <location>
        <position position="599"/>
    </location>
</feature>
<feature type="sequence variant" description="In strain: BM12987 / O24.">
    <original>D</original>
    <variation>V</variation>
    <location>
        <position position="616"/>
    </location>
</feature>
<feature type="sequence variant" description="In strain: 80s-2.">
    <original>I</original>
    <variation>N</variation>
    <location>
        <position position="698"/>
    </location>
</feature>
<feature type="sequence variant" description="In strain: BM12987 / O24.">
    <original>R</original>
    <variation>H</variation>
    <location>
        <position position="876"/>
    </location>
</feature>
<feature type="sequence variant" description="In strain: BM12987 / O24.">
    <original>D</original>
    <variation>E</variation>
    <location>
        <position position="967"/>
    </location>
</feature>
<feature type="sequence variant" description="In strain: BM12987 /O24.">
    <original>S</original>
    <variation>SESDSDSESDSDSDSDSDSDSDS</variation>
    <location>
        <position position="990"/>
    </location>
</feature>
<feature type="sequence variant" description="In strain: 80s-2.">
    <original>D</original>
    <variation>DSDSDSD</variation>
    <location>
        <position position="1089"/>
    </location>
</feature>
<feature type="helix" evidence="7">
    <location>
        <begin position="276"/>
        <end position="278"/>
    </location>
</feature>
<feature type="strand" evidence="7">
    <location>
        <begin position="279"/>
        <end position="290"/>
    </location>
</feature>
<feature type="strand" evidence="7">
    <location>
        <begin position="293"/>
        <end position="297"/>
    </location>
</feature>
<feature type="helix" evidence="7">
    <location>
        <begin position="298"/>
        <end position="300"/>
    </location>
</feature>
<feature type="strand" evidence="7">
    <location>
        <begin position="304"/>
        <end position="312"/>
    </location>
</feature>
<feature type="strand" evidence="7">
    <location>
        <begin position="321"/>
        <end position="325"/>
    </location>
</feature>
<feature type="strand" evidence="7">
    <location>
        <begin position="330"/>
        <end position="332"/>
    </location>
</feature>
<feature type="strand" evidence="7">
    <location>
        <begin position="351"/>
        <end position="358"/>
    </location>
</feature>
<feature type="turn" evidence="7">
    <location>
        <begin position="359"/>
        <end position="362"/>
    </location>
</feature>
<feature type="strand" evidence="7">
    <location>
        <begin position="363"/>
        <end position="368"/>
    </location>
</feature>
<feature type="helix" evidence="7">
    <location>
        <begin position="371"/>
        <end position="374"/>
    </location>
</feature>
<feature type="strand" evidence="7">
    <location>
        <begin position="375"/>
        <end position="388"/>
    </location>
</feature>
<feature type="turn" evidence="7">
    <location>
        <begin position="390"/>
        <end position="392"/>
    </location>
</feature>
<feature type="strand" evidence="7">
    <location>
        <begin position="397"/>
        <end position="405"/>
    </location>
</feature>
<feature type="strand" evidence="7">
    <location>
        <begin position="408"/>
        <end position="417"/>
    </location>
</feature>
<feature type="strand" evidence="7">
    <location>
        <begin position="422"/>
        <end position="424"/>
    </location>
</feature>
<feature type="strand" evidence="7">
    <location>
        <begin position="427"/>
        <end position="437"/>
    </location>
</feature>
<feature type="turn" evidence="7">
    <location>
        <begin position="438"/>
        <end position="441"/>
    </location>
</feature>
<feature type="strand" evidence="7">
    <location>
        <begin position="442"/>
        <end position="450"/>
    </location>
</feature>
<feature type="strand" evidence="7">
    <location>
        <begin position="456"/>
        <end position="468"/>
    </location>
</feature>
<feature type="strand" evidence="7">
    <location>
        <begin position="488"/>
        <end position="493"/>
    </location>
</feature>
<feature type="helix" evidence="6">
    <location>
        <begin position="509"/>
        <end position="511"/>
    </location>
</feature>
<feature type="strand" evidence="7">
    <location>
        <begin position="512"/>
        <end position="514"/>
    </location>
</feature>
<feature type="helix" evidence="7">
    <location>
        <begin position="516"/>
        <end position="518"/>
    </location>
</feature>
<feature type="strand" evidence="7">
    <location>
        <begin position="519"/>
        <end position="526"/>
    </location>
</feature>
<feature type="strand" evidence="7">
    <location>
        <begin position="529"/>
        <end position="537"/>
    </location>
</feature>
<feature type="strand" evidence="7">
    <location>
        <begin position="541"/>
        <end position="548"/>
    </location>
</feature>
<feature type="helix" evidence="7">
    <location>
        <begin position="553"/>
        <end position="556"/>
    </location>
</feature>
<feature type="strand" evidence="7">
    <location>
        <begin position="561"/>
        <end position="568"/>
    </location>
</feature>
<feature type="strand" evidence="7">
    <location>
        <begin position="572"/>
        <end position="586"/>
    </location>
</feature>
<feature type="strand" evidence="7">
    <location>
        <begin position="589"/>
        <end position="596"/>
    </location>
</feature>